<organism>
    <name type="scientific">Pseudomonas putida (strain ATCC 47054 / DSM 6125 / CFBP 8728 / NCIMB 11950 / KT2440)</name>
    <dbReference type="NCBI Taxonomy" id="160488"/>
    <lineage>
        <taxon>Bacteria</taxon>
        <taxon>Pseudomonadati</taxon>
        <taxon>Pseudomonadota</taxon>
        <taxon>Gammaproteobacteria</taxon>
        <taxon>Pseudomonadales</taxon>
        <taxon>Pseudomonadaceae</taxon>
        <taxon>Pseudomonas</taxon>
    </lineage>
</organism>
<name>TRPB_PSEPK</name>
<evidence type="ECO:0000255" key="1">
    <source>
        <dbReference type="HAMAP-Rule" id="MF_00133"/>
    </source>
</evidence>
<proteinExistence type="inferred from homology"/>
<reference key="1">
    <citation type="journal article" date="2002" name="Environ. Microbiol.">
        <title>Complete genome sequence and comparative analysis of the metabolically versatile Pseudomonas putida KT2440.</title>
        <authorList>
            <person name="Nelson K.E."/>
            <person name="Weinel C."/>
            <person name="Paulsen I.T."/>
            <person name="Dodson R.J."/>
            <person name="Hilbert H."/>
            <person name="Martins dos Santos V.A.P."/>
            <person name="Fouts D.E."/>
            <person name="Gill S.R."/>
            <person name="Pop M."/>
            <person name="Holmes M."/>
            <person name="Brinkac L.M."/>
            <person name="Beanan M.J."/>
            <person name="DeBoy R.T."/>
            <person name="Daugherty S.C."/>
            <person name="Kolonay J.F."/>
            <person name="Madupu R."/>
            <person name="Nelson W.C."/>
            <person name="White O."/>
            <person name="Peterson J.D."/>
            <person name="Khouri H.M."/>
            <person name="Hance I."/>
            <person name="Chris Lee P."/>
            <person name="Holtzapple E.K."/>
            <person name="Scanlan D."/>
            <person name="Tran K."/>
            <person name="Moazzez A."/>
            <person name="Utterback T.R."/>
            <person name="Rizzo M."/>
            <person name="Lee K."/>
            <person name="Kosack D."/>
            <person name="Moestl D."/>
            <person name="Wedler H."/>
            <person name="Lauber J."/>
            <person name="Stjepandic D."/>
            <person name="Hoheisel J."/>
            <person name="Straetz M."/>
            <person name="Heim S."/>
            <person name="Kiewitz C."/>
            <person name="Eisen J.A."/>
            <person name="Timmis K.N."/>
            <person name="Duesterhoeft A."/>
            <person name="Tuemmler B."/>
            <person name="Fraser C.M."/>
        </authorList>
    </citation>
    <scope>NUCLEOTIDE SEQUENCE [LARGE SCALE GENOMIC DNA]</scope>
    <source>
        <strain>ATCC 47054 / DSM 6125 / CFBP 8728 / NCIMB 11950 / KT2440</strain>
    </source>
</reference>
<sequence>MTQSQYRPGPDANGLFGSFGGRYVAETLMPLVLDLAREYEAAKADPKFLEELAYFQRDYIGRPNPLYFAERLTEHCGGAKIFFKREELNHTGAHKVNNCIGQVLLAKRMGKKRLIAETGAGMHGVATATVAARFGLPCVIYMGATDIERQQANVFRMKLLGAEIVPVTAGTGTLKDAMNEALRDWVTNVEDTFYLIGTVAGPHPYPAMVRDFQSIIGKETRAQLQEKEGRLPDSLVACVGGGSNAMGLFHEFLEEPSVQIIGVEAGGHGVHTDKHAASLNGGVPGVLHGNRTYLLQDQDGQITDAHSISAGLDYPGIGPEHAYLHEVKRVEYVSITDDEALDAFHATCRLEGIIPALESSHALAEAIKRAPKLPKDHLMVVCLSGRGDKDMQTVMNHMAAQEKQA</sequence>
<feature type="chain" id="PRO_0000098983" description="Tryptophan synthase beta chain">
    <location>
        <begin position="1"/>
        <end position="405"/>
    </location>
</feature>
<feature type="modified residue" description="N6-(pyridoxal phosphate)lysine" evidence="1">
    <location>
        <position position="95"/>
    </location>
</feature>
<protein>
    <recommendedName>
        <fullName evidence="1">Tryptophan synthase beta chain</fullName>
        <ecNumber evidence="1">4.2.1.20</ecNumber>
    </recommendedName>
</protein>
<accession>Q88RP6</accession>
<keyword id="KW-0028">Amino-acid biosynthesis</keyword>
<keyword id="KW-0057">Aromatic amino acid biosynthesis</keyword>
<keyword id="KW-0456">Lyase</keyword>
<keyword id="KW-0663">Pyridoxal phosphate</keyword>
<keyword id="KW-1185">Reference proteome</keyword>
<keyword id="KW-0822">Tryptophan biosynthesis</keyword>
<dbReference type="EC" id="4.2.1.20" evidence="1"/>
<dbReference type="EMBL" id="AE015451">
    <property type="protein sequence ID" value="AAN65717.1"/>
    <property type="molecule type" value="Genomic_DNA"/>
</dbReference>
<dbReference type="RefSeq" id="NP_742253.1">
    <property type="nucleotide sequence ID" value="NC_002947.4"/>
</dbReference>
<dbReference type="RefSeq" id="WP_010951489.1">
    <property type="nucleotide sequence ID" value="NZ_CP169744.1"/>
</dbReference>
<dbReference type="SMR" id="Q88RP6"/>
<dbReference type="STRING" id="160488.PP_0083"/>
<dbReference type="PaxDb" id="160488-PP_0083"/>
<dbReference type="GeneID" id="83677329"/>
<dbReference type="KEGG" id="ppu:PP_0083"/>
<dbReference type="PATRIC" id="fig|160488.4.peg.86"/>
<dbReference type="eggNOG" id="COG0133">
    <property type="taxonomic scope" value="Bacteria"/>
</dbReference>
<dbReference type="HOGENOM" id="CLU_016734_3_1_6"/>
<dbReference type="OrthoDB" id="9766131at2"/>
<dbReference type="PhylomeDB" id="Q88RP6"/>
<dbReference type="BioCyc" id="PPUT160488:G1G01-87-MONOMER"/>
<dbReference type="UniPathway" id="UPA00035">
    <property type="reaction ID" value="UER00044"/>
</dbReference>
<dbReference type="Proteomes" id="UP000000556">
    <property type="component" value="Chromosome"/>
</dbReference>
<dbReference type="GO" id="GO:0005737">
    <property type="term" value="C:cytoplasm"/>
    <property type="evidence" value="ECO:0007669"/>
    <property type="project" value="TreeGrafter"/>
</dbReference>
<dbReference type="GO" id="GO:0004834">
    <property type="term" value="F:tryptophan synthase activity"/>
    <property type="evidence" value="ECO:0007669"/>
    <property type="project" value="UniProtKB-UniRule"/>
</dbReference>
<dbReference type="CDD" id="cd06446">
    <property type="entry name" value="Trp-synth_B"/>
    <property type="match status" value="1"/>
</dbReference>
<dbReference type="FunFam" id="3.40.50.1100:FF:000001">
    <property type="entry name" value="Tryptophan synthase beta chain"/>
    <property type="match status" value="1"/>
</dbReference>
<dbReference type="FunFam" id="3.40.50.1100:FF:000004">
    <property type="entry name" value="Tryptophan synthase beta chain"/>
    <property type="match status" value="1"/>
</dbReference>
<dbReference type="Gene3D" id="3.40.50.1100">
    <property type="match status" value="2"/>
</dbReference>
<dbReference type="HAMAP" id="MF_00133">
    <property type="entry name" value="Trp_synth_beta"/>
    <property type="match status" value="1"/>
</dbReference>
<dbReference type="InterPro" id="IPR006653">
    <property type="entry name" value="Trp_synth_b_CS"/>
</dbReference>
<dbReference type="InterPro" id="IPR006654">
    <property type="entry name" value="Trp_synth_beta"/>
</dbReference>
<dbReference type="InterPro" id="IPR023026">
    <property type="entry name" value="Trp_synth_beta/beta-like"/>
</dbReference>
<dbReference type="InterPro" id="IPR001926">
    <property type="entry name" value="TrpB-like_PALP"/>
</dbReference>
<dbReference type="InterPro" id="IPR036052">
    <property type="entry name" value="TrpB-like_PALP_sf"/>
</dbReference>
<dbReference type="NCBIfam" id="TIGR00263">
    <property type="entry name" value="trpB"/>
    <property type="match status" value="1"/>
</dbReference>
<dbReference type="PANTHER" id="PTHR48077:SF3">
    <property type="entry name" value="TRYPTOPHAN SYNTHASE"/>
    <property type="match status" value="1"/>
</dbReference>
<dbReference type="PANTHER" id="PTHR48077">
    <property type="entry name" value="TRYPTOPHAN SYNTHASE-RELATED"/>
    <property type="match status" value="1"/>
</dbReference>
<dbReference type="Pfam" id="PF00291">
    <property type="entry name" value="PALP"/>
    <property type="match status" value="1"/>
</dbReference>
<dbReference type="PIRSF" id="PIRSF001413">
    <property type="entry name" value="Trp_syn_beta"/>
    <property type="match status" value="1"/>
</dbReference>
<dbReference type="SUPFAM" id="SSF53686">
    <property type="entry name" value="Tryptophan synthase beta subunit-like PLP-dependent enzymes"/>
    <property type="match status" value="1"/>
</dbReference>
<dbReference type="PROSITE" id="PS00168">
    <property type="entry name" value="TRP_SYNTHASE_BETA"/>
    <property type="match status" value="1"/>
</dbReference>
<comment type="function">
    <text evidence="1">The beta subunit is responsible for the synthesis of L-tryptophan from indole and L-serine.</text>
</comment>
<comment type="catalytic activity">
    <reaction evidence="1">
        <text>(1S,2R)-1-C-(indol-3-yl)glycerol 3-phosphate + L-serine = D-glyceraldehyde 3-phosphate + L-tryptophan + H2O</text>
        <dbReference type="Rhea" id="RHEA:10532"/>
        <dbReference type="ChEBI" id="CHEBI:15377"/>
        <dbReference type="ChEBI" id="CHEBI:33384"/>
        <dbReference type="ChEBI" id="CHEBI:57912"/>
        <dbReference type="ChEBI" id="CHEBI:58866"/>
        <dbReference type="ChEBI" id="CHEBI:59776"/>
        <dbReference type="EC" id="4.2.1.20"/>
    </reaction>
</comment>
<comment type="cofactor">
    <cofactor evidence="1">
        <name>pyridoxal 5'-phosphate</name>
        <dbReference type="ChEBI" id="CHEBI:597326"/>
    </cofactor>
</comment>
<comment type="pathway">
    <text evidence="1">Amino-acid biosynthesis; L-tryptophan biosynthesis; L-tryptophan from chorismate: step 5/5.</text>
</comment>
<comment type="subunit">
    <text evidence="1">Tetramer of two alpha and two beta chains.</text>
</comment>
<comment type="similarity">
    <text evidence="1">Belongs to the TrpB family.</text>
</comment>
<gene>
    <name evidence="1" type="primary">trpB</name>
    <name type="ordered locus">PP_0083</name>
</gene>